<accession>Q65947</accession>
<protein>
    <recommendedName>
        <fullName evidence="1">Preterminal protein</fullName>
        <shortName evidence="1">pTP</shortName>
    </recommendedName>
    <alternativeName>
        <fullName evidence="1">Bellett protein</fullName>
    </alternativeName>
    <alternativeName>
        <fullName evidence="1">Precursor terminal protein</fullName>
    </alternativeName>
    <component>
        <recommendedName>
            <fullName evidence="1">Intermediate terminal protein</fullName>
            <shortName evidence="1">iTP</shortName>
        </recommendedName>
    </component>
    <component>
        <recommendedName>
            <fullName evidence="1">Terminal protein</fullName>
            <shortName evidence="1">TP</shortName>
        </recommendedName>
    </component>
</protein>
<organism>
    <name type="scientific">Canine adenovirus serotype 1 (strain CLL)</name>
    <name type="common">CAdV-1</name>
    <name type="synonym">Canine adenovirus 1 (strain CLL)</name>
    <dbReference type="NCBI Taxonomy" id="69150"/>
    <lineage>
        <taxon>Viruses</taxon>
        <taxon>Varidnaviria</taxon>
        <taxon>Bamfordvirae</taxon>
        <taxon>Preplasmiviricota</taxon>
        <taxon>Tectiliviricetes</taxon>
        <taxon>Rowavirales</taxon>
        <taxon>Adenoviridae</taxon>
        <taxon>Mastadenovirus</taxon>
        <taxon>Canine mastadenovirus A</taxon>
    </lineage>
</organism>
<organismHost>
    <name type="scientific">Canis lupus familiaris</name>
    <name type="common">Dog</name>
    <name type="synonym">Canis familiaris</name>
    <dbReference type="NCBI Taxonomy" id="9615"/>
</organismHost>
<proteinExistence type="inferred from homology"/>
<evidence type="ECO:0000255" key="1">
    <source>
        <dbReference type="HAMAP-Rule" id="MF_04061"/>
    </source>
</evidence>
<evidence type="ECO:0000256" key="2">
    <source>
        <dbReference type="SAM" id="MobiDB-lite"/>
    </source>
</evidence>
<feature type="chain" id="PRO_0000221900" description="Preterminal protein" evidence="1">
    <location>
        <begin position="1"/>
        <end position="608"/>
    </location>
</feature>
<feature type="chain" id="PRO_0000433944" description="Intermediate terminal protein" evidence="1">
    <location>
        <begin position="176"/>
        <end position="608"/>
    </location>
</feature>
<feature type="chain" id="PRO_0000433945" description="Terminal protein" evidence="1">
    <location>
        <begin position="308"/>
        <end position="608"/>
    </location>
</feature>
<feature type="region of interest" description="Disordered" evidence="2">
    <location>
        <begin position="342"/>
        <end position="377"/>
    </location>
</feature>
<feature type="short sequence motif" description="Nuclear localization signal" evidence="1">
    <location>
        <begin position="338"/>
        <end position="347"/>
    </location>
</feature>
<feature type="site" description="Cleavage; by adenovirus protease" evidence="1">
    <location>
        <begin position="175"/>
        <end position="176"/>
    </location>
</feature>
<feature type="site" description="Cleavage; by adenovirus protease" evidence="1">
    <location>
        <begin position="307"/>
        <end position="308"/>
    </location>
</feature>
<feature type="site" description="Priming of strand displacement replication by covalently linking the first nucleotide of the new DNA chain" evidence="1">
    <location>
        <position position="536"/>
    </location>
</feature>
<feature type="modified residue" description="O-(5'-phospho-DNA)-serine" evidence="1">
    <location>
        <position position="536"/>
    </location>
</feature>
<name>TERM_ADECC</name>
<comment type="function">
    <text evidence="1">Protein covalently bound to the viral DNA that acts as a primer for viral genomic replication by DNA strand displacement. Assembles on the viral origin of replication in an initiation complex with viral polymerase, DBP, host NFIA and host POU2F1/OCT1. During initiation, the polymerase covalently couples the first dCTP with Ser-580 of pTP. The terminal protein stimulates the template activity over 20 fold compared to protein-free templates. Neo-synthesized viral genomes are linked to two preterminal proteins, one for each 5' end. These new genomes are encapsidated in the nucleus, and during capsid maturation by viral protease, preterminal protein is first cleaved into intermediary (iTP), then into mature TP. May play a role in host nuclear matrix localization of genomic DNA.</text>
</comment>
<comment type="subunit">
    <text evidence="1">Heterodimer with the polymerase; this heterodimer binds to bp 9 to 18 of the genome. Interacts with host POU2F1; POU2F1 binds to the auxiliary sequences in the inverted terminal repeats and tethers the pTP-POL heterodimer to the origin DNA thereby participating in the assembly of the pre-initiation complex (POL-TP-DBP-NFIA-POU2F1).</text>
</comment>
<comment type="subcellular location">
    <subcellularLocation>
        <location evidence="1">Host nucleus matrix</location>
    </subcellularLocation>
</comment>
<comment type="PTM">
    <text evidence="1">Preterminal protein is used to replicate viral genome, upon genomic encapsidation it is processed first into iTP and finally into TP by adenovirus protease.</text>
</comment>
<comment type="similarity">
    <text evidence="1">Belongs to the adenoviridae terminal protein family.</text>
</comment>
<keyword id="KW-0190">Covalent protein-DNA linkage</keyword>
<keyword id="KW-0235">DNA replication</keyword>
<keyword id="KW-0238">DNA-binding</keyword>
<keyword id="KW-1048">Host nucleus</keyword>
<keyword id="KW-0597">Phosphoprotein</keyword>
<keyword id="KW-1194">Viral DNA replication</keyword>
<dbReference type="EMBL" id="U55001">
    <property type="protein sequence ID" value="AAB05435.1"/>
    <property type="molecule type" value="Genomic_DNA"/>
</dbReference>
<dbReference type="GO" id="GO:0044204">
    <property type="term" value="C:host cell nuclear matrix"/>
    <property type="evidence" value="ECO:0007669"/>
    <property type="project" value="UniProtKB-SubCell"/>
</dbReference>
<dbReference type="GO" id="GO:0003690">
    <property type="term" value="F:double-stranded DNA binding"/>
    <property type="evidence" value="ECO:0007669"/>
    <property type="project" value="UniProtKB-UniRule"/>
</dbReference>
<dbReference type="GO" id="GO:0003697">
    <property type="term" value="F:single-stranded DNA binding"/>
    <property type="evidence" value="ECO:0007669"/>
    <property type="project" value="UniProtKB-UniRule"/>
</dbReference>
<dbReference type="GO" id="GO:0006260">
    <property type="term" value="P:DNA replication"/>
    <property type="evidence" value="ECO:0007669"/>
    <property type="project" value="UniProtKB-KW"/>
</dbReference>
<dbReference type="GO" id="GO:0039687">
    <property type="term" value="P:viral DNA strand displacement replication"/>
    <property type="evidence" value="ECO:0007669"/>
    <property type="project" value="UniProtKB-UniRule"/>
</dbReference>
<dbReference type="HAMAP" id="MF_04061">
    <property type="entry name" value="ADV_TERM"/>
    <property type="match status" value="1"/>
</dbReference>
<dbReference type="InterPro" id="IPR003391">
    <property type="entry name" value="Adeno_preterminal"/>
</dbReference>
<dbReference type="Pfam" id="PF02459">
    <property type="entry name" value="Adeno_terminal"/>
    <property type="match status" value="1"/>
</dbReference>
<sequence>MSLNALDCARLTGQTPYTVEVFRPIRNIFNRVREYTRASTTSVGLAWMSKYIYQYHRLMLMNLSPREPATEGWPLFLYPPPHLLVGYQYLVRTCNDYVFDTRSYSRLKYTEIHLPLQQKLNWTVMANCSYTINTGAYHRFIDFENFEETLAQVQQAVLAERVVADLALIRPMRGYGTTNMAGDRQVPVEGLLQDHYKNLSQCQNHAWGLADRMRIQNAGNKDIVILTTIRKLKTAFFNFLVSPRNPHTILSLPCDCLWLDAFMQKFTDPSLSQFQTIQSLPSQSVTKSIISALSLPGPAPCTPLSGGAFELRPRENGRAVTEEMRRRRGEMIERFIDRLPMRRRRRRAPPPPPMSEELSEPEVEAFPPASPPRRSFEEEVRDTIVEAIRLLQEELTVSARNEQFFNFAINFYEVIQRLEMLGNINELTIRRWVMYFFVAEHVATTLNYLHHNLRLYPPCSRWVDLELAQVVMRARDHEGQVVYSRVWNEMGENAFSQLMARVSGDLAATVERAGLGELEEEEMEQFMADIAYHENSGDVSEILRQVAINDTEVDSMELSFRFKVTGPVVFSQNRQIQSINRRVVALASQLRMQHRPLPAQHEQVQLPP</sequence>
<reference key="1">
    <citation type="submission" date="1996-08" db="EMBL/GenBank/DDBJ databases">
        <title>DNA sequence and genomic organization of canine adenovirus type 1.</title>
        <authorList>
            <person name="Campbell J.B."/>
            <person name="Zhao Y."/>
        </authorList>
    </citation>
    <scope>NUCLEOTIDE SEQUENCE [LARGE SCALE GENOMIC DNA]</scope>
</reference>
<gene>
    <name evidence="1" type="primary">PTP</name>
</gene>